<accession>A4IGH2</accession>
<comment type="function">
    <text evidence="1 2">May be a heme chaperone, appears to bind heme. Homologous bacterial proteins do not have oxygen-independent coproporphyrinogen-III oxidase activity (By similarity). Binds 1 [4Fe-4S] cluster. The cluster is coordinated with 3 cysteines and an exchangeable S-adenosyl-L-methionine (By similarity).</text>
</comment>
<comment type="cofactor">
    <cofactor evidence="4">
        <name>[4Fe-4S] cluster</name>
        <dbReference type="ChEBI" id="CHEBI:49883"/>
    </cofactor>
</comment>
<comment type="subcellular location">
    <subcellularLocation>
        <location evidence="5">Mitochondrion</location>
    </subcellularLocation>
</comment>
<comment type="miscellaneous">
    <text evidence="1">Might carry two S-adenosyl-L-methionine binding sites with only one binding to the iron-sulfur cluster.</text>
</comment>
<comment type="similarity">
    <text evidence="5">Belongs to the anaerobic coproporphyrinogen-III oxidase family. HemW subfamily.</text>
</comment>
<organism>
    <name type="scientific">Danio rerio</name>
    <name type="common">Zebrafish</name>
    <name type="synonym">Brachydanio rerio</name>
    <dbReference type="NCBI Taxonomy" id="7955"/>
    <lineage>
        <taxon>Eukaryota</taxon>
        <taxon>Metazoa</taxon>
        <taxon>Chordata</taxon>
        <taxon>Craniata</taxon>
        <taxon>Vertebrata</taxon>
        <taxon>Euteleostomi</taxon>
        <taxon>Actinopterygii</taxon>
        <taxon>Neopterygii</taxon>
        <taxon>Teleostei</taxon>
        <taxon>Ostariophysi</taxon>
        <taxon>Cypriniformes</taxon>
        <taxon>Danionidae</taxon>
        <taxon>Danioninae</taxon>
        <taxon>Danio</taxon>
    </lineage>
</organism>
<sequence length="444" mass="50036">MSTRVLTLTLLKKRHLMQCFWSTVGSVHLRSIASDKIPSHAVEASLYVHWPYCLKRCSYCNFNKYISRSENHDTMTECLQKETETLLKLSQVSRITSVFFGGGTPSLAQPSTIAAVLETVTKNSNLSDLAEVTLEVNPTPAGKARLKDFTLAGVNRFSIGVQSLNADHLRILGRDHSVQHALQTVSEARKLCPGRVSVDIMFALPGQSVSCWQKQLEELLYVCDDHISLYQLTLERGTQLFKQVESGKLSVPGDEVTAIMYKTACRVLEESGFHQYEVSNFARNNAVSEHNMGYWRGHQYIGVGPGAHGRFVPHGDGGVQREARTQTLEPDVWIKEVQSRGRGTRRRITLHHLQLLEEVLVMGLRMNEGITHQHWELFSPEANLQQVFGKSANIQELQGGRFLILDDRGLRCSWEGLVLLDSILPTILLELEMFFHSRGIKRTQ</sequence>
<dbReference type="EMBL" id="BC135099">
    <property type="protein sequence ID" value="AAI35100.1"/>
    <property type="molecule type" value="mRNA"/>
</dbReference>
<dbReference type="RefSeq" id="NP_001077026.1">
    <property type="nucleotide sequence ID" value="NM_001083557.1"/>
</dbReference>
<dbReference type="SMR" id="A4IGH2"/>
<dbReference type="FunCoup" id="A4IGH2">
    <property type="interactions" value="73"/>
</dbReference>
<dbReference type="STRING" id="7955.ENSDARP00000101526"/>
<dbReference type="PaxDb" id="7955-ENSDARP00000101526"/>
<dbReference type="GeneID" id="565897"/>
<dbReference type="KEGG" id="dre:565897"/>
<dbReference type="AGR" id="ZFIN:ZDB-GENE-030131-2508"/>
<dbReference type="CTD" id="55316"/>
<dbReference type="ZFIN" id="ZDB-GENE-030131-2508">
    <property type="gene designation" value="rsad1"/>
</dbReference>
<dbReference type="eggNOG" id="ENOG502QRH0">
    <property type="taxonomic scope" value="Eukaryota"/>
</dbReference>
<dbReference type="InParanoid" id="A4IGH2"/>
<dbReference type="OrthoDB" id="431409at2759"/>
<dbReference type="PRO" id="PR:A4IGH2"/>
<dbReference type="Proteomes" id="UP000000437">
    <property type="component" value="Alternate scaffold 3"/>
</dbReference>
<dbReference type="Proteomes" id="UP000000437">
    <property type="component" value="Chromosome 3"/>
</dbReference>
<dbReference type="GO" id="GO:0005737">
    <property type="term" value="C:cytoplasm"/>
    <property type="evidence" value="ECO:0000318"/>
    <property type="project" value="GO_Central"/>
</dbReference>
<dbReference type="GO" id="GO:0005739">
    <property type="term" value="C:mitochondrion"/>
    <property type="evidence" value="ECO:0007669"/>
    <property type="project" value="UniProtKB-SubCell"/>
</dbReference>
<dbReference type="GO" id="GO:0051539">
    <property type="term" value="F:4 iron, 4 sulfur cluster binding"/>
    <property type="evidence" value="ECO:0000318"/>
    <property type="project" value="GO_Central"/>
</dbReference>
<dbReference type="GO" id="GO:0004109">
    <property type="term" value="F:coproporphyrinogen oxidase activity"/>
    <property type="evidence" value="ECO:0007669"/>
    <property type="project" value="InterPro"/>
</dbReference>
<dbReference type="GO" id="GO:0046872">
    <property type="term" value="F:metal ion binding"/>
    <property type="evidence" value="ECO:0007669"/>
    <property type="project" value="UniProtKB-KW"/>
</dbReference>
<dbReference type="GO" id="GO:0006779">
    <property type="term" value="P:porphyrin-containing compound biosynthetic process"/>
    <property type="evidence" value="ECO:0000318"/>
    <property type="project" value="GO_Central"/>
</dbReference>
<dbReference type="CDD" id="cd01335">
    <property type="entry name" value="Radical_SAM"/>
    <property type="match status" value="1"/>
</dbReference>
<dbReference type="Gene3D" id="3.20.20.70">
    <property type="entry name" value="Aldolase class I"/>
    <property type="match status" value="1"/>
</dbReference>
<dbReference type="InterPro" id="IPR013785">
    <property type="entry name" value="Aldolase_TIM"/>
</dbReference>
<dbReference type="InterPro" id="IPR034505">
    <property type="entry name" value="Coproporphyrinogen-III_oxidase"/>
</dbReference>
<dbReference type="InterPro" id="IPR006638">
    <property type="entry name" value="Elp3/MiaA/NifB-like_rSAM"/>
</dbReference>
<dbReference type="InterPro" id="IPR010723">
    <property type="entry name" value="HemN_C"/>
</dbReference>
<dbReference type="InterPro" id="IPR004559">
    <property type="entry name" value="HemW-like"/>
</dbReference>
<dbReference type="InterPro" id="IPR007197">
    <property type="entry name" value="rSAM"/>
</dbReference>
<dbReference type="NCBIfam" id="TIGR00539">
    <property type="entry name" value="hemN_rel"/>
    <property type="match status" value="1"/>
</dbReference>
<dbReference type="PANTHER" id="PTHR13932">
    <property type="entry name" value="COPROPORPHYRINIGEN III OXIDASE"/>
    <property type="match status" value="1"/>
</dbReference>
<dbReference type="PANTHER" id="PTHR13932:SF5">
    <property type="entry name" value="RADICAL S-ADENOSYL METHIONINE DOMAIN-CONTAINING PROTEIN 1, MITOCHONDRIAL"/>
    <property type="match status" value="1"/>
</dbReference>
<dbReference type="Pfam" id="PF06969">
    <property type="entry name" value="HemN_C"/>
    <property type="match status" value="1"/>
</dbReference>
<dbReference type="Pfam" id="PF04055">
    <property type="entry name" value="Radical_SAM"/>
    <property type="match status" value="1"/>
</dbReference>
<dbReference type="SFLD" id="SFLDF00562">
    <property type="entry name" value="HemN-like__clustered_with_heat"/>
    <property type="match status" value="1"/>
</dbReference>
<dbReference type="SFLD" id="SFLDF00288">
    <property type="entry name" value="HemN-like__clustered_with_nucl"/>
    <property type="match status" value="1"/>
</dbReference>
<dbReference type="SFLD" id="SFLDS00029">
    <property type="entry name" value="Radical_SAM"/>
    <property type="match status" value="2"/>
</dbReference>
<dbReference type="SMART" id="SM00729">
    <property type="entry name" value="Elp3"/>
    <property type="match status" value="1"/>
</dbReference>
<dbReference type="SUPFAM" id="SSF102114">
    <property type="entry name" value="Radical SAM enzymes"/>
    <property type="match status" value="1"/>
</dbReference>
<dbReference type="PROSITE" id="PS51918">
    <property type="entry name" value="RADICAL_SAM"/>
    <property type="match status" value="1"/>
</dbReference>
<name>RSAD1_DANRE</name>
<keyword id="KW-0004">4Fe-4S</keyword>
<keyword id="KW-0143">Chaperone</keyword>
<keyword id="KW-0349">Heme</keyword>
<keyword id="KW-0408">Iron</keyword>
<keyword id="KW-0411">Iron-sulfur</keyword>
<keyword id="KW-0479">Metal-binding</keyword>
<keyword id="KW-0496">Mitochondrion</keyword>
<keyword id="KW-1185">Reference proteome</keyword>
<keyword id="KW-0949">S-adenosyl-L-methionine</keyword>
<keyword id="KW-0809">Transit peptide</keyword>
<gene>
    <name type="primary">rsad1</name>
</gene>
<reference key="1">
    <citation type="submission" date="2007-03" db="EMBL/GenBank/DDBJ databases">
        <authorList>
            <consortium name="NIH - Zebrafish Gene Collection (ZGC) project"/>
        </authorList>
    </citation>
    <scope>NUCLEOTIDE SEQUENCE [LARGE SCALE MRNA]</scope>
    <source>
        <tissue>Ovary</tissue>
    </source>
</reference>
<evidence type="ECO:0000250" key="1">
    <source>
        <dbReference type="UniProtKB" id="P32131"/>
    </source>
</evidence>
<evidence type="ECO:0000250" key="2">
    <source>
        <dbReference type="UniProtKB" id="Q9HA92"/>
    </source>
</evidence>
<evidence type="ECO:0000255" key="3"/>
<evidence type="ECO:0000255" key="4">
    <source>
        <dbReference type="PROSITE-ProRule" id="PRU01266"/>
    </source>
</evidence>
<evidence type="ECO:0000305" key="5"/>
<proteinExistence type="evidence at transcript level"/>
<protein>
    <recommendedName>
        <fullName>Radical S-adenosyl methionine domain-containing protein 1, mitochondrial</fullName>
    </recommendedName>
    <alternativeName>
        <fullName>Putative heme chaperone</fullName>
    </alternativeName>
</protein>
<feature type="transit peptide" description="Mitochondrion" evidence="3">
    <location>
        <begin position="1"/>
        <end position="39"/>
    </location>
</feature>
<feature type="chain" id="PRO_0000330866" description="Radical S-adenosyl methionine domain-containing protein 1, mitochondrial">
    <location>
        <begin position="40"/>
        <end position="444"/>
    </location>
</feature>
<feature type="domain" description="Radical SAM core" evidence="4">
    <location>
        <begin position="40"/>
        <end position="274"/>
    </location>
</feature>
<feature type="binding site" evidence="1">
    <location>
        <position position="47"/>
    </location>
    <ligand>
        <name>S-adenosyl-L-methionine</name>
        <dbReference type="ChEBI" id="CHEBI:59789"/>
        <label>1</label>
    </ligand>
</feature>
<feature type="binding site" evidence="1">
    <location>
        <position position="53"/>
    </location>
    <ligand>
        <name>[4Fe-4S] cluster</name>
        <dbReference type="ChEBI" id="CHEBI:49883"/>
        <note>4Fe-4S-S-AdoMet</note>
    </ligand>
</feature>
<feature type="binding site" evidence="1">
    <location>
        <position position="57"/>
    </location>
    <ligand>
        <name>[4Fe-4S] cluster</name>
        <dbReference type="ChEBI" id="CHEBI:49883"/>
        <note>4Fe-4S-S-AdoMet</note>
    </ligand>
</feature>
<feature type="binding site" evidence="1">
    <location>
        <position position="60"/>
    </location>
    <ligand>
        <name>[4Fe-4S] cluster</name>
        <dbReference type="ChEBI" id="CHEBI:49883"/>
        <note>4Fe-4S-S-AdoMet</note>
    </ligand>
</feature>
<feature type="binding site" evidence="1">
    <location>
        <position position="102"/>
    </location>
    <ligand>
        <name>S-adenosyl-L-methionine</name>
        <dbReference type="ChEBI" id="CHEBI:59789"/>
        <label>1</label>
    </ligand>
</feature>
<feature type="binding site" evidence="1">
    <location>
        <begin position="103"/>
        <end position="104"/>
    </location>
    <ligand>
        <name>S-adenosyl-L-methionine</name>
        <dbReference type="ChEBI" id="CHEBI:59789"/>
        <label>2</label>
    </ligand>
</feature>
<feature type="binding site" evidence="1">
    <location>
        <position position="135"/>
    </location>
    <ligand>
        <name>S-adenosyl-L-methionine</name>
        <dbReference type="ChEBI" id="CHEBI:59789"/>
        <label>1</label>
    </ligand>
</feature>
<feature type="binding site" evidence="1">
    <location>
        <position position="162"/>
    </location>
    <ligand>
        <name>S-adenosyl-L-methionine</name>
        <dbReference type="ChEBI" id="CHEBI:59789"/>
        <label>2</label>
    </ligand>
</feature>
<feature type="binding site" evidence="1">
    <location>
        <position position="174"/>
    </location>
    <ligand>
        <name>S-adenosyl-L-methionine</name>
        <dbReference type="ChEBI" id="CHEBI:59789"/>
        <label>2</label>
    </ligand>
</feature>
<feature type="binding site" evidence="1">
    <location>
        <position position="199"/>
    </location>
    <ligand>
        <name>S-adenosyl-L-methionine</name>
        <dbReference type="ChEBI" id="CHEBI:59789"/>
        <label>2</label>
    </ligand>
</feature>